<gene>
    <name type="primary">Mup17</name>
    <name type="synonym">Mup15</name>
</gene>
<reference key="1">
    <citation type="journal article" date="2009" name="PLoS Biol.">
        <title>Lineage-specific biology revealed by a finished genome assembly of the mouse.</title>
        <authorList>
            <person name="Church D.M."/>
            <person name="Goodstadt L."/>
            <person name="Hillier L.W."/>
            <person name="Zody M.C."/>
            <person name="Goldstein S."/>
            <person name="She X."/>
            <person name="Bult C.J."/>
            <person name="Agarwala R."/>
            <person name="Cherry J.L."/>
            <person name="DiCuccio M."/>
            <person name="Hlavina W."/>
            <person name="Kapustin Y."/>
            <person name="Meric P."/>
            <person name="Maglott D."/>
            <person name="Birtle Z."/>
            <person name="Marques A.C."/>
            <person name="Graves T."/>
            <person name="Zhou S."/>
            <person name="Teague B."/>
            <person name="Potamousis K."/>
            <person name="Churas C."/>
            <person name="Place M."/>
            <person name="Herschleb J."/>
            <person name="Runnheim R."/>
            <person name="Forrest D."/>
            <person name="Amos-Landgraf J."/>
            <person name="Schwartz D.C."/>
            <person name="Cheng Z."/>
            <person name="Lindblad-Toh K."/>
            <person name="Eichler E.E."/>
            <person name="Ponting C.P."/>
        </authorList>
    </citation>
    <scope>NUCLEOTIDE SEQUENCE [LARGE SCALE GENOMIC DNA]</scope>
    <source>
        <strain>C57BL/6J</strain>
    </source>
</reference>
<reference key="2">
    <citation type="journal article" date="2008" name="PLoS ONE">
        <title>Species specificity in major urinary proteins by parallel evolution.</title>
        <authorList>
            <person name="Logan D.W."/>
            <person name="Marton T.F."/>
            <person name="Stowers L."/>
        </authorList>
    </citation>
    <scope>NUCLEOTIDE SEQUENCE [GENOMIC DNA] OF 3-180</scope>
</reference>
<reference key="3">
    <citation type="journal article" date="2008" name="Genome Biol.">
        <title>Dynamic instability of the major urinary protein gene family revealed by genomic and phenotypic comparisons between C57 and 129 strain mice.</title>
        <authorList>
            <person name="Mudge J.M."/>
            <person name="Armstrong S.D."/>
            <person name="McLaren K."/>
            <person name="Beynon R.J."/>
            <person name="Hurst J.L."/>
            <person name="Nicholson C."/>
            <person name="Robertson D.H."/>
            <person name="Wilming L.G."/>
            <person name="Harrow J.L."/>
        </authorList>
    </citation>
    <scope>TISSUE SPECIFICITY</scope>
</reference>
<name>MUP17_MOUSE</name>
<accession>B5X0G2</accession>
<keyword id="KW-1015">Disulfide bond</keyword>
<keyword id="KW-0590">Pheromone-binding</keyword>
<keyword id="KW-1185">Reference proteome</keyword>
<keyword id="KW-0964">Secreted</keyword>
<keyword id="KW-0732">Signal</keyword>
<keyword id="KW-0813">Transport</keyword>
<evidence type="ECO:0000250" key="1"/>
<evidence type="ECO:0000255" key="2"/>
<evidence type="ECO:0000269" key="3">
    <source>
    </source>
</evidence>
<evidence type="ECO:0000305" key="4"/>
<sequence>MKMLLLLCLGLTLVCVHAEEASSTGRNFNVEKINGEWHTIILASDKREKIEEHGNFRLFLEQIHVLENSLVLKVHTVRDEECSELSMVADKTEKAGEYSVTYDGFNTFTIPKTDYDNFLMAHLINEKDGETFQLMGLYGREPDLSSDIKERFAQLCEEHGILRENIIDLSNANRCLQARE</sequence>
<proteinExistence type="evidence at transcript level"/>
<feature type="signal peptide" evidence="2">
    <location>
        <begin position="1"/>
        <end position="18"/>
    </location>
</feature>
<feature type="chain" id="PRO_0000415145" description="Major urinary protein 17">
    <location>
        <begin position="19"/>
        <end position="180"/>
    </location>
</feature>
<feature type="disulfide bond" evidence="1">
    <location>
        <begin position="82"/>
        <end position="175"/>
    </location>
</feature>
<dbReference type="EMBL" id="BX001066">
    <property type="status" value="NOT_ANNOTATED_CDS"/>
    <property type="molecule type" value="Genomic_DNA"/>
</dbReference>
<dbReference type="EMBL" id="BK006665">
    <property type="protein sequence ID" value="DAA06311.1"/>
    <property type="molecule type" value="Genomic_DNA"/>
</dbReference>
<dbReference type="CCDS" id="CCDS51198.1"/>
<dbReference type="RefSeq" id="NP_001186935.1">
    <property type="nucleotide sequence ID" value="NM_001200006.1"/>
</dbReference>
<dbReference type="BMRB" id="B5X0G2"/>
<dbReference type="SMR" id="B5X0G2"/>
<dbReference type="FunCoup" id="B5X0G2">
    <property type="interactions" value="322"/>
</dbReference>
<dbReference type="STRING" id="10090.ENSMUSP00000103108"/>
<dbReference type="Allergome" id="478">
    <property type="allergen name" value="Mus m 1"/>
</dbReference>
<dbReference type="iPTMnet" id="B5X0G2"/>
<dbReference type="PhosphoSitePlus" id="B5X0G2"/>
<dbReference type="SwissPalm" id="B5X0G2"/>
<dbReference type="jPOST" id="B5X0G2"/>
<dbReference type="PaxDb" id="10090-ENSMUSP00000103108"/>
<dbReference type="PeptideAtlas" id="B5X0G2"/>
<dbReference type="Ensembl" id="ENSMUST00000107484.2">
    <property type="protein sequence ID" value="ENSMUSP00000103108.2"/>
    <property type="gene ID" value="ENSMUSG00000096688.2"/>
</dbReference>
<dbReference type="GeneID" id="100039206"/>
<dbReference type="KEGG" id="mmu:100039206"/>
<dbReference type="UCSC" id="uc012dfm.2">
    <property type="organism name" value="mouse"/>
</dbReference>
<dbReference type="AGR" id="MGI:3705217"/>
<dbReference type="CTD" id="100039206"/>
<dbReference type="MGI" id="MGI:3705217">
    <property type="gene designation" value="Mup17"/>
</dbReference>
<dbReference type="VEuPathDB" id="HostDB:ENSMUSG00000096688"/>
<dbReference type="eggNOG" id="ENOG502S6GK">
    <property type="taxonomic scope" value="Eukaryota"/>
</dbReference>
<dbReference type="GeneTree" id="ENSGT01050000244868"/>
<dbReference type="HOGENOM" id="CLU_094061_4_0_1"/>
<dbReference type="InParanoid" id="B5X0G2"/>
<dbReference type="OMA" id="MCILAVN"/>
<dbReference type="PhylomeDB" id="B5X0G2"/>
<dbReference type="TreeFam" id="TF338197"/>
<dbReference type="BioGRID-ORCS" id="100039206">
    <property type="hits" value="1 hit in 21 CRISPR screens"/>
</dbReference>
<dbReference type="ChiTaRS" id="Mup17">
    <property type="organism name" value="mouse"/>
</dbReference>
<dbReference type="PRO" id="PR:B5X0G2"/>
<dbReference type="Proteomes" id="UP000000589">
    <property type="component" value="Chromosome 4"/>
</dbReference>
<dbReference type="RNAct" id="B5X0G2">
    <property type="molecule type" value="protein"/>
</dbReference>
<dbReference type="Bgee" id="ENSMUSG00000096688">
    <property type="expression patterns" value="Expressed in liver and 24 other cell types or tissues"/>
</dbReference>
<dbReference type="GO" id="GO:0005576">
    <property type="term" value="C:extracellular region"/>
    <property type="evidence" value="ECO:0007669"/>
    <property type="project" value="UniProtKB-SubCell"/>
</dbReference>
<dbReference type="GO" id="GO:0005550">
    <property type="term" value="F:pheromone binding"/>
    <property type="evidence" value="ECO:0007669"/>
    <property type="project" value="UniProtKB-KW"/>
</dbReference>
<dbReference type="GO" id="GO:0036094">
    <property type="term" value="F:small molecule binding"/>
    <property type="evidence" value="ECO:0007669"/>
    <property type="project" value="InterPro"/>
</dbReference>
<dbReference type="CDD" id="cd19428">
    <property type="entry name" value="lipocalin_MUP-like"/>
    <property type="match status" value="1"/>
</dbReference>
<dbReference type="FunFam" id="2.40.128.20:FF:000008">
    <property type="entry name" value="Major urinary protein"/>
    <property type="match status" value="1"/>
</dbReference>
<dbReference type="Gene3D" id="2.40.128.20">
    <property type="match status" value="1"/>
</dbReference>
<dbReference type="InterPro" id="IPR012674">
    <property type="entry name" value="Calycin"/>
</dbReference>
<dbReference type="InterPro" id="IPR002345">
    <property type="entry name" value="Lipocalin"/>
</dbReference>
<dbReference type="InterPro" id="IPR022272">
    <property type="entry name" value="Lipocalin_CS"/>
</dbReference>
<dbReference type="InterPro" id="IPR000566">
    <property type="entry name" value="Lipocln_cytosolic_FA-bd_dom"/>
</dbReference>
<dbReference type="InterPro" id="IPR002971">
    <property type="entry name" value="Maj_urinary"/>
</dbReference>
<dbReference type="PANTHER" id="PTHR11430">
    <property type="entry name" value="LIPOCALIN"/>
    <property type="match status" value="1"/>
</dbReference>
<dbReference type="PANTHER" id="PTHR11430:SF76">
    <property type="entry name" value="MAJOR URINARY PROTEIN 1-RELATED"/>
    <property type="match status" value="1"/>
</dbReference>
<dbReference type="Pfam" id="PF00061">
    <property type="entry name" value="Lipocalin"/>
    <property type="match status" value="1"/>
</dbReference>
<dbReference type="PRINTS" id="PR00179">
    <property type="entry name" value="LIPOCALIN"/>
</dbReference>
<dbReference type="PRINTS" id="PR01221">
    <property type="entry name" value="MAJORURINARY"/>
</dbReference>
<dbReference type="SUPFAM" id="SSF50814">
    <property type="entry name" value="Lipocalins"/>
    <property type="match status" value="1"/>
</dbReference>
<dbReference type="PROSITE" id="PS00213">
    <property type="entry name" value="LIPOCALIN"/>
    <property type="match status" value="1"/>
</dbReference>
<protein>
    <recommendedName>
        <fullName>Major urinary protein 17</fullName>
        <shortName>MUP 17</shortName>
    </recommendedName>
</protein>
<comment type="function">
    <text evidence="1">Major urinary proteins (Mups) bind pheromones, thus stabilize them and allow slow release into the air from urine marks. May protect pheromones from oxidation. May also act as pheromones themselves. In this context, they play a role in the regulation of social behaviors, such as aggression, mating, pup-suckling, territory establishment and dominance (By similarity).</text>
</comment>
<comment type="subcellular location">
    <subcellularLocation>
        <location evidence="1">Secreted</location>
    </subcellularLocation>
</comment>
<comment type="tissue specificity">
    <text evidence="3">Because of their involvement in the coordination of social behavior, Mup proteins are thought to exhibit variable expression depending upon gender, age and status of the studied individuals. Expression may also be strain-specific: in strains C57BL/6J and 129S7, transcriptional support is lacking for Mup17.</text>
</comment>
<comment type="similarity">
    <text evidence="4">Belongs to the calycin superfamily. Lipocalin family.</text>
</comment>
<comment type="caution">
    <text evidence="4">Mups are encoded by multiple paralogous genes which are very similar to each other, making accurate identification difficult. The recommended nomenclature used in this entry is based on that provided by the MGI database.</text>
</comment>
<organism>
    <name type="scientific">Mus musculus</name>
    <name type="common">Mouse</name>
    <dbReference type="NCBI Taxonomy" id="10090"/>
    <lineage>
        <taxon>Eukaryota</taxon>
        <taxon>Metazoa</taxon>
        <taxon>Chordata</taxon>
        <taxon>Craniata</taxon>
        <taxon>Vertebrata</taxon>
        <taxon>Euteleostomi</taxon>
        <taxon>Mammalia</taxon>
        <taxon>Eutheria</taxon>
        <taxon>Euarchontoglires</taxon>
        <taxon>Glires</taxon>
        <taxon>Rodentia</taxon>
        <taxon>Myomorpha</taxon>
        <taxon>Muroidea</taxon>
        <taxon>Muridae</taxon>
        <taxon>Murinae</taxon>
        <taxon>Mus</taxon>
        <taxon>Mus</taxon>
    </lineage>
</organism>